<organism>
    <name type="scientific">Homo sapiens</name>
    <name type="common">Human</name>
    <dbReference type="NCBI Taxonomy" id="9606"/>
    <lineage>
        <taxon>Eukaryota</taxon>
        <taxon>Metazoa</taxon>
        <taxon>Chordata</taxon>
        <taxon>Craniata</taxon>
        <taxon>Vertebrata</taxon>
        <taxon>Euteleostomi</taxon>
        <taxon>Mammalia</taxon>
        <taxon>Eutheria</taxon>
        <taxon>Euarchontoglires</taxon>
        <taxon>Primates</taxon>
        <taxon>Haplorrhini</taxon>
        <taxon>Catarrhini</taxon>
        <taxon>Hominidae</taxon>
        <taxon>Homo</taxon>
    </lineage>
</organism>
<evidence type="ECO:0000250" key="1">
    <source>
        <dbReference type="UniProtKB" id="O88910"/>
    </source>
</evidence>
<evidence type="ECO:0000250" key="2">
    <source>
        <dbReference type="UniProtKB" id="O88954"/>
    </source>
</evidence>
<evidence type="ECO:0000255" key="3">
    <source>
        <dbReference type="PROSITE-ProRule" id="PRU00100"/>
    </source>
</evidence>
<evidence type="ECO:0000255" key="4">
    <source>
        <dbReference type="PROSITE-ProRule" id="PRU00143"/>
    </source>
</evidence>
<evidence type="ECO:0000255" key="5">
    <source>
        <dbReference type="PROSITE-ProRule" id="PRU00192"/>
    </source>
</evidence>
<evidence type="ECO:0000255" key="6">
    <source>
        <dbReference type="PROSITE-ProRule" id="PRU00365"/>
    </source>
</evidence>
<evidence type="ECO:0000269" key="7">
    <source>
    </source>
</evidence>
<evidence type="ECO:0000269" key="8">
    <source>
    </source>
</evidence>
<evidence type="ECO:0000303" key="9">
    <source>
    </source>
</evidence>
<evidence type="ECO:0000303" key="10">
    <source>
    </source>
</evidence>
<evidence type="ECO:0000305" key="11"/>
<evidence type="ECO:0000312" key="12">
    <source>
        <dbReference type="HGNC" id="HGNC:7221"/>
    </source>
</evidence>
<reference key="1">
    <citation type="journal article" date="1996" name="Genomics">
        <title>Isolation of a gene (DLG3) encoding a second member of the discs-large family on chromosome 17q12-q21.</title>
        <authorList>
            <person name="Smith S.A."/>
            <person name="Holik P."/>
            <person name="Stevens J."/>
            <person name="Mazoyer S."/>
            <person name="Melis R."/>
            <person name="Williams B."/>
            <person name="White R."/>
            <person name="Albertsen H."/>
        </authorList>
    </citation>
    <scope>NUCLEOTIDE SEQUENCE [MRNA]</scope>
</reference>
<reference key="2">
    <citation type="journal article" date="2006" name="FEBS J.">
        <title>MPP3 is recruited to the MPP5 protein scaffold at the retinal outer limiting membrane.</title>
        <authorList>
            <person name="Kantardzhieva A."/>
            <person name="Alexeeva S."/>
            <person name="Versteeg I."/>
            <person name="Wijnholds J."/>
        </authorList>
    </citation>
    <scope>NUCLEOTIDE SEQUENCE [MRNA] (ISOFORMS 1 AND 2)</scope>
    <scope>INTERACTION WITH PALS1 AND DLG1</scope>
    <scope>SUBCELLULAR LOCATION</scope>
    <scope>TISSUE SPECIFICITY</scope>
    <source>
        <tissue>Retina</tissue>
    </source>
</reference>
<reference key="3">
    <citation type="journal article" date="2004" name="Nat. Genet.">
        <title>Complete sequencing and characterization of 21,243 full-length human cDNAs.</title>
        <authorList>
            <person name="Ota T."/>
            <person name="Suzuki Y."/>
            <person name="Nishikawa T."/>
            <person name="Otsuki T."/>
            <person name="Sugiyama T."/>
            <person name="Irie R."/>
            <person name="Wakamatsu A."/>
            <person name="Hayashi K."/>
            <person name="Sato H."/>
            <person name="Nagai K."/>
            <person name="Kimura K."/>
            <person name="Makita H."/>
            <person name="Sekine M."/>
            <person name="Obayashi M."/>
            <person name="Nishi T."/>
            <person name="Shibahara T."/>
            <person name="Tanaka T."/>
            <person name="Ishii S."/>
            <person name="Yamamoto J."/>
            <person name="Saito K."/>
            <person name="Kawai Y."/>
            <person name="Isono Y."/>
            <person name="Nakamura Y."/>
            <person name="Nagahari K."/>
            <person name="Murakami K."/>
            <person name="Yasuda T."/>
            <person name="Iwayanagi T."/>
            <person name="Wagatsuma M."/>
            <person name="Shiratori A."/>
            <person name="Sudo H."/>
            <person name="Hosoiri T."/>
            <person name="Kaku Y."/>
            <person name="Kodaira H."/>
            <person name="Kondo H."/>
            <person name="Sugawara M."/>
            <person name="Takahashi M."/>
            <person name="Kanda K."/>
            <person name="Yokoi T."/>
            <person name="Furuya T."/>
            <person name="Kikkawa E."/>
            <person name="Omura Y."/>
            <person name="Abe K."/>
            <person name="Kamihara K."/>
            <person name="Katsuta N."/>
            <person name="Sato K."/>
            <person name="Tanikawa M."/>
            <person name="Yamazaki M."/>
            <person name="Ninomiya K."/>
            <person name="Ishibashi T."/>
            <person name="Yamashita H."/>
            <person name="Murakawa K."/>
            <person name="Fujimori K."/>
            <person name="Tanai H."/>
            <person name="Kimata M."/>
            <person name="Watanabe M."/>
            <person name="Hiraoka S."/>
            <person name="Chiba Y."/>
            <person name="Ishida S."/>
            <person name="Ono Y."/>
            <person name="Takiguchi S."/>
            <person name="Watanabe S."/>
            <person name="Yosida M."/>
            <person name="Hotuta T."/>
            <person name="Kusano J."/>
            <person name="Kanehori K."/>
            <person name="Takahashi-Fujii A."/>
            <person name="Hara H."/>
            <person name="Tanase T.-O."/>
            <person name="Nomura Y."/>
            <person name="Togiya S."/>
            <person name="Komai F."/>
            <person name="Hara R."/>
            <person name="Takeuchi K."/>
            <person name="Arita M."/>
            <person name="Imose N."/>
            <person name="Musashino K."/>
            <person name="Yuuki H."/>
            <person name="Oshima A."/>
            <person name="Sasaki N."/>
            <person name="Aotsuka S."/>
            <person name="Yoshikawa Y."/>
            <person name="Matsunawa H."/>
            <person name="Ichihara T."/>
            <person name="Shiohata N."/>
            <person name="Sano S."/>
            <person name="Moriya S."/>
            <person name="Momiyama H."/>
            <person name="Satoh N."/>
            <person name="Takami S."/>
            <person name="Terashima Y."/>
            <person name="Suzuki O."/>
            <person name="Nakagawa S."/>
            <person name="Senoh A."/>
            <person name="Mizoguchi H."/>
            <person name="Goto Y."/>
            <person name="Shimizu F."/>
            <person name="Wakebe H."/>
            <person name="Hishigaki H."/>
            <person name="Watanabe T."/>
            <person name="Sugiyama A."/>
            <person name="Takemoto M."/>
            <person name="Kawakami B."/>
            <person name="Yamazaki M."/>
            <person name="Watanabe K."/>
            <person name="Kumagai A."/>
            <person name="Itakura S."/>
            <person name="Fukuzumi Y."/>
            <person name="Fujimori Y."/>
            <person name="Komiyama M."/>
            <person name="Tashiro H."/>
            <person name="Tanigami A."/>
            <person name="Fujiwara T."/>
            <person name="Ono T."/>
            <person name="Yamada K."/>
            <person name="Fujii Y."/>
            <person name="Ozaki K."/>
            <person name="Hirao M."/>
            <person name="Ohmori Y."/>
            <person name="Kawabata A."/>
            <person name="Hikiji T."/>
            <person name="Kobatake N."/>
            <person name="Inagaki H."/>
            <person name="Ikema Y."/>
            <person name="Okamoto S."/>
            <person name="Okitani R."/>
            <person name="Kawakami T."/>
            <person name="Noguchi S."/>
            <person name="Itoh T."/>
            <person name="Shigeta K."/>
            <person name="Senba T."/>
            <person name="Matsumura K."/>
            <person name="Nakajima Y."/>
            <person name="Mizuno T."/>
            <person name="Morinaga M."/>
            <person name="Sasaki M."/>
            <person name="Togashi T."/>
            <person name="Oyama M."/>
            <person name="Hata H."/>
            <person name="Watanabe M."/>
            <person name="Komatsu T."/>
            <person name="Mizushima-Sugano J."/>
            <person name="Satoh T."/>
            <person name="Shirai Y."/>
            <person name="Takahashi Y."/>
            <person name="Nakagawa K."/>
            <person name="Okumura K."/>
            <person name="Nagase T."/>
            <person name="Nomura N."/>
            <person name="Kikuchi H."/>
            <person name="Masuho Y."/>
            <person name="Yamashita R."/>
            <person name="Nakai K."/>
            <person name="Yada T."/>
            <person name="Nakamura Y."/>
            <person name="Ohara O."/>
            <person name="Isogai T."/>
            <person name="Sugano S."/>
        </authorList>
    </citation>
    <scope>NUCLEOTIDE SEQUENCE [LARGE SCALE MRNA]</scope>
    <source>
        <tissue>Brain</tissue>
    </source>
</reference>
<reference key="4">
    <citation type="journal article" date="2006" name="Nature">
        <title>DNA sequence of human chromosome 17 and analysis of rearrangement in the human lineage.</title>
        <authorList>
            <person name="Zody M.C."/>
            <person name="Garber M."/>
            <person name="Adams D.J."/>
            <person name="Sharpe T."/>
            <person name="Harrow J."/>
            <person name="Lupski J.R."/>
            <person name="Nicholson C."/>
            <person name="Searle S.M."/>
            <person name="Wilming L."/>
            <person name="Young S.K."/>
            <person name="Abouelleil A."/>
            <person name="Allen N.R."/>
            <person name="Bi W."/>
            <person name="Bloom T."/>
            <person name="Borowsky M.L."/>
            <person name="Bugalter B.E."/>
            <person name="Butler J."/>
            <person name="Chang J.L."/>
            <person name="Chen C.-K."/>
            <person name="Cook A."/>
            <person name="Corum B."/>
            <person name="Cuomo C.A."/>
            <person name="de Jong P.J."/>
            <person name="DeCaprio D."/>
            <person name="Dewar K."/>
            <person name="FitzGerald M."/>
            <person name="Gilbert J."/>
            <person name="Gibson R."/>
            <person name="Gnerre S."/>
            <person name="Goldstein S."/>
            <person name="Grafham D.V."/>
            <person name="Grocock R."/>
            <person name="Hafez N."/>
            <person name="Hagopian D.S."/>
            <person name="Hart E."/>
            <person name="Norman C.H."/>
            <person name="Humphray S."/>
            <person name="Jaffe D.B."/>
            <person name="Jones M."/>
            <person name="Kamal M."/>
            <person name="Khodiyar V.K."/>
            <person name="LaButti K."/>
            <person name="Laird G."/>
            <person name="Lehoczky J."/>
            <person name="Liu X."/>
            <person name="Lokyitsang T."/>
            <person name="Loveland J."/>
            <person name="Lui A."/>
            <person name="Macdonald P."/>
            <person name="Major J.E."/>
            <person name="Matthews L."/>
            <person name="Mauceli E."/>
            <person name="McCarroll S.A."/>
            <person name="Mihalev A.H."/>
            <person name="Mudge J."/>
            <person name="Nguyen C."/>
            <person name="Nicol R."/>
            <person name="O'Leary S.B."/>
            <person name="Osoegawa K."/>
            <person name="Schwartz D.C."/>
            <person name="Shaw-Smith C."/>
            <person name="Stankiewicz P."/>
            <person name="Steward C."/>
            <person name="Swarbreck D."/>
            <person name="Venkataraman V."/>
            <person name="Whittaker C.A."/>
            <person name="Yang X."/>
            <person name="Zimmer A.R."/>
            <person name="Bradley A."/>
            <person name="Hubbard T."/>
            <person name="Birren B.W."/>
            <person name="Rogers J."/>
            <person name="Lander E.S."/>
            <person name="Nusbaum C."/>
        </authorList>
    </citation>
    <scope>NUCLEOTIDE SEQUENCE [LARGE SCALE GENOMIC DNA]</scope>
</reference>
<reference key="5">
    <citation type="submission" date="2005-09" db="EMBL/GenBank/DDBJ databases">
        <authorList>
            <person name="Mural R.J."/>
            <person name="Istrail S."/>
            <person name="Sutton G.G."/>
            <person name="Florea L."/>
            <person name="Halpern A.L."/>
            <person name="Mobarry C.M."/>
            <person name="Lippert R."/>
            <person name="Walenz B."/>
            <person name="Shatkay H."/>
            <person name="Dew I."/>
            <person name="Miller J.R."/>
            <person name="Flanigan M.J."/>
            <person name="Edwards N.J."/>
            <person name="Bolanos R."/>
            <person name="Fasulo D."/>
            <person name="Halldorsson B.V."/>
            <person name="Hannenhalli S."/>
            <person name="Turner R."/>
            <person name="Yooseph S."/>
            <person name="Lu F."/>
            <person name="Nusskern D.R."/>
            <person name="Shue B.C."/>
            <person name="Zheng X.H."/>
            <person name="Zhong F."/>
            <person name="Delcher A.L."/>
            <person name="Huson D.H."/>
            <person name="Kravitz S.A."/>
            <person name="Mouchard L."/>
            <person name="Reinert K."/>
            <person name="Remington K.A."/>
            <person name="Clark A.G."/>
            <person name="Waterman M.S."/>
            <person name="Eichler E.E."/>
            <person name="Adams M.D."/>
            <person name="Hunkapiller M.W."/>
            <person name="Myers E.W."/>
            <person name="Venter J.C."/>
        </authorList>
    </citation>
    <scope>NUCLEOTIDE SEQUENCE [LARGE SCALE GENOMIC DNA]</scope>
</reference>
<reference key="6">
    <citation type="journal article" date="2004" name="Genome Res.">
        <title>The status, quality, and expansion of the NIH full-length cDNA project: the Mammalian Gene Collection (MGC).</title>
        <authorList>
            <consortium name="The MGC Project Team"/>
        </authorList>
    </citation>
    <scope>NUCLEOTIDE SEQUENCE [LARGE SCALE MRNA]</scope>
    <source>
        <tissue>Brain</tissue>
        <tissue>Pancreas</tissue>
    </source>
</reference>
<reference key="7">
    <citation type="journal article" date="2003" name="Oncogene">
        <title>Association of a lung tumor suppressor TSLC1 with MPP3, a human homologue of Drosophila tumor suppressor Dlg.</title>
        <authorList>
            <person name="Fukuhara H."/>
            <person name="Masuda M."/>
            <person name="Yageta M."/>
            <person name="Fukami T."/>
            <person name="Kuramochi M."/>
            <person name="Maruyama T."/>
            <person name="Kitamura T."/>
            <person name="Murakami Y."/>
        </authorList>
    </citation>
    <scope>INTERACTION WITH CADM1</scope>
</reference>
<reference key="8">
    <citation type="journal article" date="2014" name="PLoS ONE">
        <title>Trans-homophilic interaction of CADM1 activates PI3K by forming a complex with MAGuK-family proteins MPP3 and Dlg.</title>
        <authorList>
            <person name="Murakami S."/>
            <person name="Sakurai-Yageta M."/>
            <person name="Maruyama T."/>
            <person name="Murakami Y."/>
        </authorList>
    </citation>
    <scope>FUNCTION</scope>
    <scope>INTERACTION WITH CADM1 AND DLG1</scope>
    <scope>SUBCELLULAR LOCATION</scope>
</reference>
<reference key="9">
    <citation type="journal article" date="2014" name="PLoS ONE">
        <title>Trans-homophilic interaction of CADM1 activates PI3K by forming a complex with MAGuK-family proteins MPP3 and Dlg.</title>
        <authorList>
            <person name="Murakami S."/>
            <person name="Sakurai-Yageta M."/>
            <person name="Maruyama T."/>
            <person name="Murakami Y."/>
        </authorList>
    </citation>
    <scope>ERRATUM OF PUBMED:24503895</scope>
</reference>
<sequence length="585" mass="66152">MPVLSEDSGLHETLALLTSQLRPDSNHKEEMGFLRDVFSEKSLSYLMKIHEKLRYYERQSPTPVLHSAVALAEDVMEELQAASVHSDERELLQLLSTPHLRAVLMVHDTVAQKNFDPVLPPLPDNIDEDFDEESVKIVRLVKNKEPLGATIRRDEHSGAVVVARIMRGGAADRSGLVHVGDELREVNGIAVLHKRPDEISQILAQSQGSITLKIIPATQEEDRLKESKVFMRALFHYNPREDRAIPCQEAGLPFQRRQVLEVVSQDDPTWWQAKRVGDTNLRAGLIPSKGFQERRLSYRRAAGTLPSPQSLRKPPYDQPCDKETCDCEGYLKGHYVAGLRRSFRLGCRERLGGSQEGKMSSGAESPELLTYEEVARYQHQPGERPRLVVLIGSLGARLHELKQKVVAENPQHFGVAVPHTTRPRKSHEKEGVEYHFVSKQAFEADLHHNKFLEHGEYKENLYGTSLEAIQAVMAKNKVCLVDVEPEALKQLRTSEFKPYIIFVKPAIQEKRKTPPMSPACEDTAAPFDEQQQEMAASAAFIDRHYGHLVDAVLVKEDLQGAYSQLKVVLEKLSKDTHWVPVSWVR</sequence>
<gene>
    <name evidence="9 12" type="primary">MPP3</name>
    <name evidence="10" type="synonym">DLG3</name>
</gene>
<feature type="chain" id="PRO_0000094575" description="MAGUK p55 subfamily member 3">
    <location>
        <begin position="1"/>
        <end position="585"/>
    </location>
</feature>
<feature type="domain" description="L27 1" evidence="6">
    <location>
        <begin position="6"/>
        <end position="60"/>
    </location>
</feature>
<feature type="domain" description="L27 2" evidence="6">
    <location>
        <begin position="61"/>
        <end position="118"/>
    </location>
</feature>
<feature type="domain" description="PDZ" evidence="4">
    <location>
        <begin position="137"/>
        <end position="212"/>
    </location>
</feature>
<feature type="domain" description="SH3" evidence="5">
    <location>
        <begin position="226"/>
        <end position="296"/>
    </location>
</feature>
<feature type="domain" description="Guanylate kinase-like" evidence="3">
    <location>
        <begin position="385"/>
        <end position="570"/>
    </location>
</feature>
<feature type="modified residue" description="Phosphoserine" evidence="2">
    <location>
        <position position="307"/>
    </location>
</feature>
<feature type="splice variant" id="VSP_061794" description="In isoform 2.">
    <location>
        <begin position="316"/>
        <end position="585"/>
    </location>
</feature>
<feature type="sequence variant" id="VAR_050014" description="In dbSNP:rs17742683.">
    <original>R</original>
    <variation>G</variation>
    <location>
        <position position="585"/>
    </location>
</feature>
<feature type="sequence conflict" description="In Ref. 1; AAB36964." evidence="11" ref="1">
    <original>V</original>
    <variation>D</variation>
    <location>
        <position position="37"/>
    </location>
</feature>
<dbReference type="EMBL" id="U37707">
    <property type="protein sequence ID" value="AAB36964.1"/>
    <property type="molecule type" value="mRNA"/>
</dbReference>
<dbReference type="EMBL" id="AM050144">
    <property type="protein sequence ID" value="CAJ18313.1"/>
    <property type="molecule type" value="mRNA"/>
</dbReference>
<dbReference type="EMBL" id="AM050145">
    <property type="protein sequence ID" value="CAJ18315.1"/>
    <property type="molecule type" value="mRNA"/>
</dbReference>
<dbReference type="EMBL" id="AK313045">
    <property type="protein sequence ID" value="BAG35877.1"/>
    <property type="molecule type" value="mRNA"/>
</dbReference>
<dbReference type="EMBL" id="AC003098">
    <property type="status" value="NOT_ANNOTATED_CDS"/>
    <property type="molecule type" value="Genomic_DNA"/>
</dbReference>
<dbReference type="EMBL" id="CH471178">
    <property type="protein sequence ID" value="EAW51663.1"/>
    <property type="molecule type" value="Genomic_DNA"/>
</dbReference>
<dbReference type="EMBL" id="CH471178">
    <property type="protein sequence ID" value="EAW51664.1"/>
    <property type="molecule type" value="Genomic_DNA"/>
</dbReference>
<dbReference type="EMBL" id="CH471178">
    <property type="protein sequence ID" value="EAW51665.1"/>
    <property type="molecule type" value="Genomic_DNA"/>
</dbReference>
<dbReference type="EMBL" id="BC047017">
    <property type="protein sequence ID" value="AAH47017.1"/>
    <property type="status" value="ALT_INIT"/>
    <property type="molecule type" value="mRNA"/>
</dbReference>
<dbReference type="EMBL" id="BC056865">
    <property type="protein sequence ID" value="AAH56865.1"/>
    <property type="molecule type" value="mRNA"/>
</dbReference>
<dbReference type="CCDS" id="CCDS42344.1">
    <molecule id="Q13368-1"/>
</dbReference>
<dbReference type="PIR" id="G02165">
    <property type="entry name" value="G02165"/>
</dbReference>
<dbReference type="RefSeq" id="NP_001317162.1">
    <property type="nucleotide sequence ID" value="NM_001330233.1"/>
</dbReference>
<dbReference type="RefSeq" id="NP_001923.2">
    <molecule id="Q13368-1"/>
    <property type="nucleotide sequence ID" value="NM_001932.4"/>
</dbReference>
<dbReference type="RefSeq" id="XP_006721978.1">
    <molecule id="Q13368-1"/>
    <property type="nucleotide sequence ID" value="XM_006721915.3"/>
</dbReference>
<dbReference type="RefSeq" id="XP_047292059.1">
    <molecule id="Q13368-2"/>
    <property type="nucleotide sequence ID" value="XM_047436103.1"/>
</dbReference>
<dbReference type="RefSeq" id="XP_054172159.1">
    <molecule id="Q13368-1"/>
    <property type="nucleotide sequence ID" value="XM_054316184.1"/>
</dbReference>
<dbReference type="RefSeq" id="XP_054172169.1">
    <molecule id="Q13368-2"/>
    <property type="nucleotide sequence ID" value="XM_054316194.1"/>
</dbReference>
<dbReference type="SMR" id="Q13368"/>
<dbReference type="BioGRID" id="110496">
    <property type="interactions" value="35"/>
</dbReference>
<dbReference type="CORUM" id="Q13368"/>
<dbReference type="FunCoup" id="Q13368">
    <property type="interactions" value="334"/>
</dbReference>
<dbReference type="IntAct" id="Q13368">
    <property type="interactions" value="34"/>
</dbReference>
<dbReference type="STRING" id="9606.ENSP00000381430"/>
<dbReference type="iPTMnet" id="Q13368"/>
<dbReference type="PhosphoSitePlus" id="Q13368"/>
<dbReference type="BioMuta" id="MPP3"/>
<dbReference type="DMDM" id="150421601"/>
<dbReference type="MassIVE" id="Q13368"/>
<dbReference type="PaxDb" id="9606-ENSP00000381425"/>
<dbReference type="PeptideAtlas" id="Q13368"/>
<dbReference type="ProteomicsDB" id="59353"/>
<dbReference type="Antibodypedia" id="8160">
    <property type="antibodies" value="319 antibodies from 28 providers"/>
</dbReference>
<dbReference type="DNASU" id="4356"/>
<dbReference type="Ensembl" id="ENST00000398389.9">
    <molecule id="Q13368-1"/>
    <property type="protein sequence ID" value="ENSP00000381425.4"/>
    <property type="gene ID" value="ENSG00000161647.19"/>
</dbReference>
<dbReference type="Ensembl" id="ENST00000496503.5">
    <molecule id="Q13368-2"/>
    <property type="protein sequence ID" value="ENSP00000465486.1"/>
    <property type="gene ID" value="ENSG00000161647.19"/>
</dbReference>
<dbReference type="GeneID" id="4356"/>
<dbReference type="KEGG" id="hsa:4356"/>
<dbReference type="MANE-Select" id="ENST00000398389.9">
    <property type="protein sequence ID" value="ENSP00000381425.4"/>
    <property type="RefSeq nucleotide sequence ID" value="NM_001932.6"/>
    <property type="RefSeq protein sequence ID" value="NP_001923.2"/>
</dbReference>
<dbReference type="UCSC" id="uc002iei.5">
    <molecule id="Q13368-1"/>
    <property type="organism name" value="human"/>
</dbReference>
<dbReference type="AGR" id="HGNC:7221"/>
<dbReference type="CTD" id="4356"/>
<dbReference type="DisGeNET" id="4356"/>
<dbReference type="GeneCards" id="MPP3"/>
<dbReference type="HGNC" id="HGNC:7221">
    <property type="gene designation" value="MPP3"/>
</dbReference>
<dbReference type="HPA" id="ENSG00000161647">
    <property type="expression patterns" value="Group enriched (brain, heart muscle)"/>
</dbReference>
<dbReference type="MIM" id="601114">
    <property type="type" value="gene"/>
</dbReference>
<dbReference type="neXtProt" id="NX_Q13368"/>
<dbReference type="OpenTargets" id="ENSG00000161647"/>
<dbReference type="PharmGKB" id="PA30926"/>
<dbReference type="VEuPathDB" id="HostDB:ENSG00000161647"/>
<dbReference type="eggNOG" id="KOG0609">
    <property type="taxonomic scope" value="Eukaryota"/>
</dbReference>
<dbReference type="GeneTree" id="ENSGT00940000157190"/>
<dbReference type="HOGENOM" id="CLU_001715_5_0_1"/>
<dbReference type="InParanoid" id="Q13368"/>
<dbReference type="OMA" id="MARNKVC"/>
<dbReference type="OrthoDB" id="439127at2759"/>
<dbReference type="PAN-GO" id="Q13368">
    <property type="GO annotations" value="2 GO annotations based on evolutionary models"/>
</dbReference>
<dbReference type="PhylomeDB" id="Q13368"/>
<dbReference type="TreeFam" id="TF314263"/>
<dbReference type="PathwayCommons" id="Q13368"/>
<dbReference type="SignaLink" id="Q13368"/>
<dbReference type="BioGRID-ORCS" id="4356">
    <property type="hits" value="36 hits in 1149 CRISPR screens"/>
</dbReference>
<dbReference type="GenomeRNAi" id="4356"/>
<dbReference type="Pharos" id="Q13368">
    <property type="development level" value="Tbio"/>
</dbReference>
<dbReference type="PRO" id="PR:Q13368"/>
<dbReference type="Proteomes" id="UP000005640">
    <property type="component" value="Chromosome 17"/>
</dbReference>
<dbReference type="RNAct" id="Q13368">
    <property type="molecule type" value="protein"/>
</dbReference>
<dbReference type="Bgee" id="ENSG00000161647">
    <property type="expression patterns" value="Expressed in apex of heart and 129 other cell types or tissues"/>
</dbReference>
<dbReference type="ExpressionAtlas" id="Q13368">
    <property type="expression patterns" value="baseline and differential"/>
</dbReference>
<dbReference type="GO" id="GO:0005912">
    <property type="term" value="C:adherens junction"/>
    <property type="evidence" value="ECO:0000250"/>
    <property type="project" value="UniProtKB"/>
</dbReference>
<dbReference type="GO" id="GO:0016324">
    <property type="term" value="C:apical plasma membrane"/>
    <property type="evidence" value="ECO:0000250"/>
    <property type="project" value="UniProtKB"/>
</dbReference>
<dbReference type="GO" id="GO:0005911">
    <property type="term" value="C:cell-cell junction"/>
    <property type="evidence" value="ECO:0000318"/>
    <property type="project" value="GO_Central"/>
</dbReference>
<dbReference type="GO" id="GO:0005886">
    <property type="term" value="C:plasma membrane"/>
    <property type="evidence" value="ECO:0000314"/>
    <property type="project" value="UniProtKB"/>
</dbReference>
<dbReference type="GO" id="GO:0030165">
    <property type="term" value="F:PDZ domain binding"/>
    <property type="evidence" value="ECO:0007669"/>
    <property type="project" value="Ensembl"/>
</dbReference>
<dbReference type="CDD" id="cd00071">
    <property type="entry name" value="GMPK"/>
    <property type="match status" value="1"/>
</dbReference>
<dbReference type="CDD" id="cd06799">
    <property type="entry name" value="PDZ_MPP3-MPP4-MPP7-like"/>
    <property type="match status" value="1"/>
</dbReference>
<dbReference type="CDD" id="cd12039">
    <property type="entry name" value="SH3_MPP3"/>
    <property type="match status" value="1"/>
</dbReference>
<dbReference type="FunFam" id="3.30.63.10:FF:000002">
    <property type="entry name" value="Guanylate kinase 1"/>
    <property type="match status" value="1"/>
</dbReference>
<dbReference type="FunFam" id="2.30.30.40:FF:000215">
    <property type="entry name" value="MAGUK p55 subfamily member 3"/>
    <property type="match status" value="1"/>
</dbReference>
<dbReference type="FunFam" id="3.40.50.300:FF:003612">
    <property type="entry name" value="MAGUK p55 subfamily member 3"/>
    <property type="match status" value="1"/>
</dbReference>
<dbReference type="FunFam" id="2.30.42.10:FF:000046">
    <property type="entry name" value="MAGUK p55 subfamily member 7"/>
    <property type="match status" value="1"/>
</dbReference>
<dbReference type="Gene3D" id="2.30.42.10">
    <property type="match status" value="1"/>
</dbReference>
<dbReference type="Gene3D" id="1.10.287.650">
    <property type="entry name" value="L27 domain"/>
    <property type="match status" value="1"/>
</dbReference>
<dbReference type="Gene3D" id="3.40.50.300">
    <property type="entry name" value="P-loop containing nucleotide triphosphate hydrolases"/>
    <property type="match status" value="1"/>
</dbReference>
<dbReference type="Gene3D" id="2.30.30.40">
    <property type="entry name" value="SH3 Domains"/>
    <property type="match status" value="1"/>
</dbReference>
<dbReference type="InterPro" id="IPR008145">
    <property type="entry name" value="GK/Ca_channel_bsu"/>
</dbReference>
<dbReference type="InterPro" id="IPR008144">
    <property type="entry name" value="Guanylate_kin-like_dom"/>
</dbReference>
<dbReference type="InterPro" id="IPR020590">
    <property type="entry name" value="Guanylate_kinase_CS"/>
</dbReference>
<dbReference type="InterPro" id="IPR014775">
    <property type="entry name" value="L27_C"/>
</dbReference>
<dbReference type="InterPro" id="IPR004172">
    <property type="entry name" value="L27_dom"/>
</dbReference>
<dbReference type="InterPro" id="IPR036892">
    <property type="entry name" value="L27_dom_sf"/>
</dbReference>
<dbReference type="InterPro" id="IPR050716">
    <property type="entry name" value="MAGUK"/>
</dbReference>
<dbReference type="InterPro" id="IPR035604">
    <property type="entry name" value="MPP3_SH3"/>
</dbReference>
<dbReference type="InterPro" id="IPR027417">
    <property type="entry name" value="P-loop_NTPase"/>
</dbReference>
<dbReference type="InterPro" id="IPR001478">
    <property type="entry name" value="PDZ"/>
</dbReference>
<dbReference type="InterPro" id="IPR036034">
    <property type="entry name" value="PDZ_sf"/>
</dbReference>
<dbReference type="InterPro" id="IPR036028">
    <property type="entry name" value="SH3-like_dom_sf"/>
</dbReference>
<dbReference type="InterPro" id="IPR001452">
    <property type="entry name" value="SH3_domain"/>
</dbReference>
<dbReference type="PANTHER" id="PTHR23122">
    <property type="entry name" value="MEMBRANE-ASSOCIATED GUANYLATE KINASE MAGUK"/>
    <property type="match status" value="1"/>
</dbReference>
<dbReference type="Pfam" id="PF00625">
    <property type="entry name" value="Guanylate_kin"/>
    <property type="match status" value="1"/>
</dbReference>
<dbReference type="Pfam" id="PF02828">
    <property type="entry name" value="L27"/>
    <property type="match status" value="2"/>
</dbReference>
<dbReference type="Pfam" id="PF00595">
    <property type="entry name" value="PDZ"/>
    <property type="match status" value="1"/>
</dbReference>
<dbReference type="Pfam" id="PF07653">
    <property type="entry name" value="SH3_2"/>
    <property type="match status" value="1"/>
</dbReference>
<dbReference type="SMART" id="SM00072">
    <property type="entry name" value="GuKc"/>
    <property type="match status" value="1"/>
</dbReference>
<dbReference type="SMART" id="SM00569">
    <property type="entry name" value="L27"/>
    <property type="match status" value="2"/>
</dbReference>
<dbReference type="SMART" id="SM00228">
    <property type="entry name" value="PDZ"/>
    <property type="match status" value="1"/>
</dbReference>
<dbReference type="SMART" id="SM00326">
    <property type="entry name" value="SH3"/>
    <property type="match status" value="1"/>
</dbReference>
<dbReference type="SUPFAM" id="SSF101288">
    <property type="entry name" value="L27 domain"/>
    <property type="match status" value="1"/>
</dbReference>
<dbReference type="SUPFAM" id="SSF52540">
    <property type="entry name" value="P-loop containing nucleoside triphosphate hydrolases"/>
    <property type="match status" value="1"/>
</dbReference>
<dbReference type="SUPFAM" id="SSF50156">
    <property type="entry name" value="PDZ domain-like"/>
    <property type="match status" value="1"/>
</dbReference>
<dbReference type="SUPFAM" id="SSF50044">
    <property type="entry name" value="SH3-domain"/>
    <property type="match status" value="1"/>
</dbReference>
<dbReference type="PROSITE" id="PS00856">
    <property type="entry name" value="GUANYLATE_KINASE_1"/>
    <property type="match status" value="1"/>
</dbReference>
<dbReference type="PROSITE" id="PS50052">
    <property type="entry name" value="GUANYLATE_KINASE_2"/>
    <property type="match status" value="1"/>
</dbReference>
<dbReference type="PROSITE" id="PS51022">
    <property type="entry name" value="L27"/>
    <property type="match status" value="2"/>
</dbReference>
<dbReference type="PROSITE" id="PS50106">
    <property type="entry name" value="PDZ"/>
    <property type="match status" value="1"/>
</dbReference>
<dbReference type="PROSITE" id="PS50002">
    <property type="entry name" value="SH3"/>
    <property type="match status" value="1"/>
</dbReference>
<protein>
    <recommendedName>
        <fullName evidence="11">MAGUK p55 subfamily member 3</fullName>
    </recommendedName>
    <alternativeName>
        <fullName>Discs large homolog 3</fullName>
    </alternativeName>
    <alternativeName>
        <fullName>Protein MPP3</fullName>
    </alternativeName>
</protein>
<name>MPP3_HUMAN</name>
<accession>Q13368</accession>
<accession>A0A0C4DGP3</accession>
<accession>B2R7N0</accession>
<accession>D3DX47</accession>
<accession>Q4GX05</accession>
<accession>Q6PGR3</accession>
<accession>Q86SV1</accession>
<proteinExistence type="evidence at protein level"/>
<comment type="function">
    <text evidence="1 8">Participates in cell spreading through the phosphoinositide-3-kinase (PI3K) pathway by connecting CADM1 to DLG1 and the regulatory subunit of phosphoinositide-3-kinase (PI3K) (PubMed:24503895). Stabilizes HTR2C at the plasma membrane and prevents its desensitization. May participates in the maintenance of adherens junctions (By similarity).</text>
</comment>
<comment type="subunit">
    <text evidence="1 7 8">Interacts with HTR2C; this interaction stabilizes the receptor at the plasma membrane and prevents the desensitization of the HTR2C receptor-mediated calcium response (By similarity). Interacts with HTR2A (By similarity). Interacts with HTR4 (By similarity). Interacts (via PDZ domain) with CADM1 (via C-terminus)Interacts (via PDZ domain) with CADM1; this interaction connects CADM1 with DLG1 (PubMed:24503895). Interacts (via Guanylate kinase-like domain) with PALS1 (PubMed:16519681). Interacts with DLG1 (via N-terminus); this interaction connects CADM1 with DLG1 and links CADM1 with the regulatory subunit of phosphoinositide-3-kinase (PI3K) by forming a multiprotein complex and participates in cell spreading (PubMed:16519681, PubMed:24503895).</text>
</comment>
<comment type="interaction">
    <interactant intactId="EBI-716157">
        <id>Q13368</id>
    </interactant>
    <interactant intactId="EBI-935503">
        <id>Q9H0C5</id>
        <label>BTBD1</label>
    </interactant>
    <organismsDiffer>false</organismsDiffer>
    <experiments>3</experiments>
</comment>
<comment type="interaction">
    <interactant intactId="EBI-716157">
        <id>Q13368</id>
    </interactant>
    <interactant intactId="EBI-2513988">
        <id>O14910</id>
        <label>LIN7A</label>
    </interactant>
    <organismsDiffer>false</organismsDiffer>
    <experiments>5</experiments>
</comment>
<comment type="interaction">
    <interactant intactId="EBI-716157">
        <id>Q13368</id>
    </interactant>
    <interactant intactId="EBI-821335">
        <id>Q9HAP6</id>
        <label>LIN7B</label>
    </interactant>
    <organismsDiffer>false</organismsDiffer>
    <experiments>9</experiments>
</comment>
<comment type="interaction">
    <interactant intactId="EBI-716157">
        <id>Q13368</id>
    </interactant>
    <interactant intactId="EBI-1171517">
        <id>Q9NUP9</id>
        <label>LIN7C</label>
    </interactant>
    <organismsDiffer>false</organismsDiffer>
    <experiments>9</experiments>
</comment>
<comment type="interaction">
    <interactant intactId="EBI-716157">
        <id>Q13368</id>
    </interactant>
    <interactant intactId="EBI-1373569">
        <id>P55347</id>
        <label>PKNOX1</label>
    </interactant>
    <organismsDiffer>false</organismsDiffer>
    <experiments>3</experiments>
</comment>
<comment type="interaction">
    <interactant intactId="EBI-716157">
        <id>Q13368</id>
    </interactant>
    <interactant intactId="EBI-625509">
        <id>Q8N720</id>
        <label>ZNF655</label>
    </interactant>
    <organismsDiffer>false</organismsDiffer>
    <experiments>3</experiments>
</comment>
<comment type="subcellular location">
    <subcellularLocation>
        <location evidence="8">Cell membrane</location>
    </subcellularLocation>
    <subcellularLocation>
        <location evidence="7">Apical cell membrane</location>
    </subcellularLocation>
    <subcellularLocation>
        <location evidence="7">Cell junction</location>
        <location evidence="7">Adherens junction</location>
    </subcellularLocation>
    <text evidence="1 7">Localized in apical villi of Mueller glia cells (By similarity). Localized at the apical membrane in the developing cortex and colocalized with apical proteins and adherens junction proteins (By similarity). Localized at the outer limiting membrane (OLM), and outer plexiform (OPL) of retina (PubMed:16519681).</text>
</comment>
<comment type="alternative products">
    <event type="alternative splicing"/>
    <isoform>
        <id>Q13368-1</id>
        <name>1</name>
        <sequence type="displayed"/>
    </isoform>
    <isoform>
        <id>Q13368-2</id>
        <name>2</name>
        <sequence type="described" ref="VSP_061794"/>
    </isoform>
</comment>
<comment type="tissue specificity">
    <text evidence="7">Expressed in retina (at protein level) at the subapical region (SAR) adjacent to adherens junctions at the OLM, and at the OPL.</text>
</comment>
<comment type="miscellaneous">
    <molecule>Isoform 2</molecule>
    <text evidence="11">May be produced at very low levels due to a premature stop codon in the mRNA, leading to nonsense-mediated mRNA decay.</text>
</comment>
<comment type="similarity">
    <text evidence="11">Belongs to the MAGUK family.</text>
</comment>
<comment type="sequence caution" evidence="11">
    <conflict type="erroneous initiation">
        <sequence resource="EMBL-CDS" id="AAH47017"/>
    </conflict>
    <text>Extended N-terminus.</text>
</comment>
<keyword id="KW-0025">Alternative splicing</keyword>
<keyword id="KW-0965">Cell junction</keyword>
<keyword id="KW-1003">Cell membrane</keyword>
<keyword id="KW-0472">Membrane</keyword>
<keyword id="KW-0597">Phosphoprotein</keyword>
<keyword id="KW-1267">Proteomics identification</keyword>
<keyword id="KW-1185">Reference proteome</keyword>
<keyword id="KW-0677">Repeat</keyword>
<keyword id="KW-0728">SH3 domain</keyword>